<sequence>MASAAAAEAEKGSPVVVGLLVVGNIIILLSGLSLFAETIWVTADQYRVYPLMGVSGKDDVFAGAWIAIFCGFSFFMVASFGVGAALCRRRSMVLTYLVLMLIVYIFECASCITSYTHRDYMVSNPSLITKQMLTFYSADTDQGQELTRLWDRVMIEQECCGTSGPMDWVNFTSAFRAATPEVVFPWPPLCCRRTGNFIPLNEEGCRLGHMDYLFTKGCFEHIGHAIDSYTWGISWFGFAILMWTLPVMLIAMYFYTML</sequence>
<protein>
    <recommendedName>
        <fullName>Uroplakin-1a</fullName>
        <shortName>UP1a</shortName>
    </recommendedName>
    <alternativeName>
        <fullName>Tetraspanin-21</fullName>
        <shortName>Tspan-21</shortName>
    </alternativeName>
    <alternativeName>
        <fullName>Uroplakin Ia</fullName>
        <shortName>UPIa</shortName>
        <shortName>UPKa</shortName>
    </alternativeName>
</protein>
<proteinExistence type="evidence at protein level"/>
<keyword id="KW-0025">Alternative splicing</keyword>
<keyword id="KW-1015">Disulfide bond</keyword>
<keyword id="KW-0325">Glycoprotein</keyword>
<keyword id="KW-0472">Membrane</keyword>
<keyword id="KW-1267">Proteomics identification</keyword>
<keyword id="KW-1185">Reference proteome</keyword>
<keyword id="KW-0812">Transmembrane</keyword>
<keyword id="KW-1133">Transmembrane helix</keyword>
<dbReference type="EMBL" id="AC002115">
    <property type="protein sequence ID" value="AAB57631.1"/>
    <property type="molecule type" value="Genomic_DNA"/>
</dbReference>
<dbReference type="EMBL" id="AC002314">
    <property type="protein sequence ID" value="AAB62736.1"/>
    <property type="molecule type" value="Genomic_DNA"/>
</dbReference>
<dbReference type="EMBL" id="BC107097">
    <property type="protein sequence ID" value="AAI07098.1"/>
    <property type="molecule type" value="mRNA"/>
</dbReference>
<dbReference type="EMBL" id="BC107098">
    <property type="protein sequence ID" value="AAI07099.1"/>
    <property type="molecule type" value="mRNA"/>
</dbReference>
<dbReference type="EMBL" id="AF085807">
    <property type="protein sequence ID" value="AAC34887.1"/>
    <property type="molecule type" value="mRNA"/>
</dbReference>
<dbReference type="CCDS" id="CCDS12470.1">
    <molecule id="O00322-1"/>
</dbReference>
<dbReference type="CCDS" id="CCDS62640.1">
    <molecule id="O00322-2"/>
</dbReference>
<dbReference type="RefSeq" id="NP_001268372.1">
    <molecule id="O00322-2"/>
    <property type="nucleotide sequence ID" value="NM_001281443.2"/>
</dbReference>
<dbReference type="RefSeq" id="NP_008931.1">
    <molecule id="O00322-1"/>
    <property type="nucleotide sequence ID" value="NM_007000.4"/>
</dbReference>
<dbReference type="SMR" id="O00322"/>
<dbReference type="BioGRID" id="116233">
    <property type="interactions" value="243"/>
</dbReference>
<dbReference type="FunCoup" id="O00322">
    <property type="interactions" value="76"/>
</dbReference>
<dbReference type="IntAct" id="O00322">
    <property type="interactions" value="148"/>
</dbReference>
<dbReference type="MINT" id="O00322"/>
<dbReference type="STRING" id="9606.ENSP00000478942"/>
<dbReference type="TCDB" id="8.A.40.7.1">
    <property type="family name" value="the tetraspanin (tetraspanin) family"/>
</dbReference>
<dbReference type="GlyCosmos" id="O00322">
    <property type="glycosylation" value="1 site, No reported glycans"/>
</dbReference>
<dbReference type="GlyGen" id="O00322">
    <property type="glycosylation" value="1 site"/>
</dbReference>
<dbReference type="PhosphoSitePlus" id="O00322"/>
<dbReference type="BioMuta" id="UPK1A"/>
<dbReference type="MassIVE" id="O00322"/>
<dbReference type="PaxDb" id="9606-ENSP00000478942"/>
<dbReference type="PeptideAtlas" id="O00322"/>
<dbReference type="ProteomicsDB" id="47838">
    <molecule id="O00322-1"/>
</dbReference>
<dbReference type="ProteomicsDB" id="47839">
    <molecule id="O00322-2"/>
</dbReference>
<dbReference type="Antibodypedia" id="54114">
    <property type="antibodies" value="152 antibodies from 26 providers"/>
</dbReference>
<dbReference type="DNASU" id="11045"/>
<dbReference type="Ensembl" id="ENST00000222275.3">
    <molecule id="O00322-1"/>
    <property type="protein sequence ID" value="ENSP00000222275.2"/>
    <property type="gene ID" value="ENSG00000105668.8"/>
</dbReference>
<dbReference type="Ensembl" id="ENST00000379013.6">
    <molecule id="O00322-2"/>
    <property type="protein sequence ID" value="ENSP00000368298.1"/>
    <property type="gene ID" value="ENSG00000105668.8"/>
</dbReference>
<dbReference type="GeneID" id="11045"/>
<dbReference type="KEGG" id="hsa:11045"/>
<dbReference type="MANE-Select" id="ENST00000222275.3">
    <property type="protein sequence ID" value="ENSP00000222275.2"/>
    <property type="RefSeq nucleotide sequence ID" value="NM_007000.4"/>
    <property type="RefSeq protein sequence ID" value="NP_008931.1"/>
</dbReference>
<dbReference type="UCSC" id="uc002oaw.5">
    <molecule id="O00322-1"/>
    <property type="organism name" value="human"/>
</dbReference>
<dbReference type="AGR" id="HGNC:12577"/>
<dbReference type="CTD" id="11045"/>
<dbReference type="DisGeNET" id="11045"/>
<dbReference type="GeneCards" id="UPK1A"/>
<dbReference type="HGNC" id="HGNC:12577">
    <property type="gene designation" value="UPK1A"/>
</dbReference>
<dbReference type="HPA" id="ENSG00000105668">
    <property type="expression patterns" value="Tissue enriched (urinary)"/>
</dbReference>
<dbReference type="MIM" id="611557">
    <property type="type" value="gene"/>
</dbReference>
<dbReference type="neXtProt" id="NX_O00322"/>
<dbReference type="OpenTargets" id="ENSG00000105668"/>
<dbReference type="PharmGKB" id="PA37209"/>
<dbReference type="VEuPathDB" id="HostDB:ENSG00000105668"/>
<dbReference type="eggNOG" id="KOG3882">
    <property type="taxonomic scope" value="Eukaryota"/>
</dbReference>
<dbReference type="GeneTree" id="ENSGT00940000160881"/>
<dbReference type="HOGENOM" id="CLU_088971_1_0_1"/>
<dbReference type="InParanoid" id="O00322"/>
<dbReference type="OMA" id="VVYIFEC"/>
<dbReference type="OrthoDB" id="6361633at2759"/>
<dbReference type="PAN-GO" id="O00322">
    <property type="GO annotations" value="1 GO annotation based on evolutionary models"/>
</dbReference>
<dbReference type="PhylomeDB" id="O00322"/>
<dbReference type="TreeFam" id="TF335659"/>
<dbReference type="PathwayCommons" id="O00322"/>
<dbReference type="SignaLink" id="O00322"/>
<dbReference type="BioGRID-ORCS" id="11045">
    <property type="hits" value="37 hits in 1147 CRISPR screens"/>
</dbReference>
<dbReference type="GeneWiki" id="UPK1A"/>
<dbReference type="GenomeRNAi" id="11045"/>
<dbReference type="Pharos" id="O00322">
    <property type="development level" value="Tbio"/>
</dbReference>
<dbReference type="PRO" id="PR:O00322"/>
<dbReference type="Proteomes" id="UP000005640">
    <property type="component" value="Chromosome 19"/>
</dbReference>
<dbReference type="RNAct" id="O00322">
    <property type="molecule type" value="protein"/>
</dbReference>
<dbReference type="Bgee" id="ENSG00000105668">
    <property type="expression patterns" value="Expressed in lower esophagus mucosa and 95 other cell types or tissues"/>
</dbReference>
<dbReference type="GO" id="GO:0120001">
    <property type="term" value="C:apical plasma membrane urothelial plaque"/>
    <property type="evidence" value="ECO:0007669"/>
    <property type="project" value="Ensembl"/>
</dbReference>
<dbReference type="GO" id="GO:0009986">
    <property type="term" value="C:cell surface"/>
    <property type="evidence" value="ECO:0000314"/>
    <property type="project" value="AgBase"/>
</dbReference>
<dbReference type="GO" id="GO:0005783">
    <property type="term" value="C:endoplasmic reticulum"/>
    <property type="evidence" value="ECO:0000250"/>
    <property type="project" value="UniProtKB"/>
</dbReference>
<dbReference type="GO" id="GO:0070062">
    <property type="term" value="C:extracellular exosome"/>
    <property type="evidence" value="ECO:0007005"/>
    <property type="project" value="UniProtKB"/>
</dbReference>
<dbReference type="GO" id="GO:0016020">
    <property type="term" value="C:membrane"/>
    <property type="evidence" value="ECO:0000250"/>
    <property type="project" value="UniProtKB"/>
</dbReference>
<dbReference type="GO" id="GO:0005886">
    <property type="term" value="C:plasma membrane"/>
    <property type="evidence" value="ECO:0000250"/>
    <property type="project" value="UniProtKB"/>
</dbReference>
<dbReference type="GO" id="GO:0032991">
    <property type="term" value="C:protein-containing complex"/>
    <property type="evidence" value="ECO:0000250"/>
    <property type="project" value="UniProtKB"/>
</dbReference>
<dbReference type="GO" id="GO:0030855">
    <property type="term" value="P:epithelial cell differentiation"/>
    <property type="evidence" value="ECO:0000314"/>
    <property type="project" value="UniProtKB"/>
</dbReference>
<dbReference type="CDD" id="cd03156">
    <property type="entry name" value="uroplakin_I_like_LEL"/>
    <property type="match status" value="1"/>
</dbReference>
<dbReference type="FunFam" id="1.10.1450.10:FF:000017">
    <property type="entry name" value="Tetraspanin"/>
    <property type="match status" value="1"/>
</dbReference>
<dbReference type="Gene3D" id="1.10.1450.10">
    <property type="entry name" value="Tetraspanin"/>
    <property type="match status" value="1"/>
</dbReference>
<dbReference type="InterPro" id="IPR018499">
    <property type="entry name" value="Tetraspanin/Peripherin"/>
</dbReference>
<dbReference type="InterPro" id="IPR000301">
    <property type="entry name" value="Tetraspanin_animals"/>
</dbReference>
<dbReference type="InterPro" id="IPR008952">
    <property type="entry name" value="Tetraspanin_EC2_sf"/>
</dbReference>
<dbReference type="PANTHER" id="PTHR47110">
    <property type="entry name" value="TESTIS-SPECIFIC EXPRESSED PROTEIN 55"/>
    <property type="match status" value="1"/>
</dbReference>
<dbReference type="PANTHER" id="PTHR47110:SF2">
    <property type="entry name" value="UROPLAKIN-1B"/>
    <property type="match status" value="1"/>
</dbReference>
<dbReference type="Pfam" id="PF00335">
    <property type="entry name" value="Tetraspanin"/>
    <property type="match status" value="1"/>
</dbReference>
<dbReference type="PIRSF" id="PIRSF002419">
    <property type="entry name" value="Tetraspanin"/>
    <property type="match status" value="1"/>
</dbReference>
<dbReference type="PRINTS" id="PR00259">
    <property type="entry name" value="TMFOUR"/>
</dbReference>
<dbReference type="SUPFAM" id="SSF48652">
    <property type="entry name" value="Tetraspanin"/>
    <property type="match status" value="1"/>
</dbReference>
<evidence type="ECO:0000250" key="1"/>
<evidence type="ECO:0000255" key="2"/>
<evidence type="ECO:0000269" key="3">
    <source>
    </source>
</evidence>
<evidence type="ECO:0000269" key="4">
    <source>
    </source>
</evidence>
<evidence type="ECO:0000269" key="5">
    <source>
    </source>
</evidence>
<evidence type="ECO:0000303" key="6">
    <source>
    </source>
</evidence>
<evidence type="ECO:0000305" key="7"/>
<organism>
    <name type="scientific">Homo sapiens</name>
    <name type="common">Human</name>
    <dbReference type="NCBI Taxonomy" id="9606"/>
    <lineage>
        <taxon>Eukaryota</taxon>
        <taxon>Metazoa</taxon>
        <taxon>Chordata</taxon>
        <taxon>Craniata</taxon>
        <taxon>Vertebrata</taxon>
        <taxon>Euteleostomi</taxon>
        <taxon>Mammalia</taxon>
        <taxon>Eutheria</taxon>
        <taxon>Euarchontoglires</taxon>
        <taxon>Primates</taxon>
        <taxon>Haplorrhini</taxon>
        <taxon>Catarrhini</taxon>
        <taxon>Hominidae</taxon>
        <taxon>Homo</taxon>
    </lineage>
</organism>
<reference key="1">
    <citation type="journal article" date="2004" name="Nature">
        <title>The DNA sequence and biology of human chromosome 19.</title>
        <authorList>
            <person name="Grimwood J."/>
            <person name="Gordon L.A."/>
            <person name="Olsen A.S."/>
            <person name="Terry A."/>
            <person name="Schmutz J."/>
            <person name="Lamerdin J.E."/>
            <person name="Hellsten U."/>
            <person name="Goodstein D."/>
            <person name="Couronne O."/>
            <person name="Tran-Gyamfi M."/>
            <person name="Aerts A."/>
            <person name="Altherr M."/>
            <person name="Ashworth L."/>
            <person name="Bajorek E."/>
            <person name="Black S."/>
            <person name="Branscomb E."/>
            <person name="Caenepeel S."/>
            <person name="Carrano A.V."/>
            <person name="Caoile C."/>
            <person name="Chan Y.M."/>
            <person name="Christensen M."/>
            <person name="Cleland C.A."/>
            <person name="Copeland A."/>
            <person name="Dalin E."/>
            <person name="Dehal P."/>
            <person name="Denys M."/>
            <person name="Detter J.C."/>
            <person name="Escobar J."/>
            <person name="Flowers D."/>
            <person name="Fotopulos D."/>
            <person name="Garcia C."/>
            <person name="Georgescu A.M."/>
            <person name="Glavina T."/>
            <person name="Gomez M."/>
            <person name="Gonzales E."/>
            <person name="Groza M."/>
            <person name="Hammon N."/>
            <person name="Hawkins T."/>
            <person name="Haydu L."/>
            <person name="Ho I."/>
            <person name="Huang W."/>
            <person name="Israni S."/>
            <person name="Jett J."/>
            <person name="Kadner K."/>
            <person name="Kimball H."/>
            <person name="Kobayashi A."/>
            <person name="Larionov V."/>
            <person name="Leem S.-H."/>
            <person name="Lopez F."/>
            <person name="Lou Y."/>
            <person name="Lowry S."/>
            <person name="Malfatti S."/>
            <person name="Martinez D."/>
            <person name="McCready P.M."/>
            <person name="Medina C."/>
            <person name="Morgan J."/>
            <person name="Nelson K."/>
            <person name="Nolan M."/>
            <person name="Ovcharenko I."/>
            <person name="Pitluck S."/>
            <person name="Pollard M."/>
            <person name="Popkie A.P."/>
            <person name="Predki P."/>
            <person name="Quan G."/>
            <person name="Ramirez L."/>
            <person name="Rash S."/>
            <person name="Retterer J."/>
            <person name="Rodriguez A."/>
            <person name="Rogers S."/>
            <person name="Salamov A."/>
            <person name="Salazar A."/>
            <person name="She X."/>
            <person name="Smith D."/>
            <person name="Slezak T."/>
            <person name="Solovyev V."/>
            <person name="Thayer N."/>
            <person name="Tice H."/>
            <person name="Tsai M."/>
            <person name="Ustaszewska A."/>
            <person name="Vo N."/>
            <person name="Wagner M."/>
            <person name="Wheeler J."/>
            <person name="Wu K."/>
            <person name="Xie G."/>
            <person name="Yang J."/>
            <person name="Dubchak I."/>
            <person name="Furey T.S."/>
            <person name="DeJong P."/>
            <person name="Dickson M."/>
            <person name="Gordon D."/>
            <person name="Eichler E.E."/>
            <person name="Pennacchio L.A."/>
            <person name="Richardson P."/>
            <person name="Stubbs L."/>
            <person name="Rokhsar D.S."/>
            <person name="Myers R.M."/>
            <person name="Rubin E.M."/>
            <person name="Lucas S.M."/>
        </authorList>
    </citation>
    <scope>NUCLEOTIDE SEQUENCE [LARGE SCALE GENOMIC DNA]</scope>
</reference>
<reference key="2">
    <citation type="journal article" date="2004" name="Genome Res.">
        <title>The status, quality, and expansion of the NIH full-length cDNA project: the Mammalian Gene Collection (MGC).</title>
        <authorList>
            <consortium name="The MGC Project Team"/>
        </authorList>
    </citation>
    <scope>NUCLEOTIDE SEQUENCE [LARGE SCALE MRNA] (ISOFORMS 1 AND 2)</scope>
    <scope>VARIANT THR-257</scope>
</reference>
<reference key="3">
    <citation type="journal article" date="2005" name="Biochim. Biophys. Acta">
        <title>Transcriptional control of the human urothelial-specific gene, uroplakin Ia.</title>
        <authorList>
            <person name="Hall G.D."/>
            <person name="Weeks R.J."/>
            <person name="Olsburgh J."/>
            <person name="Southgate J."/>
            <person name="Knowles M.A."/>
            <person name="Selby P.J."/>
            <person name="Chester J.D."/>
        </authorList>
    </citation>
    <scope>NUCLEOTIDE SEQUENCE [MRNA] OF 3-258 (ISOFORM 1)</scope>
    <scope>TISSUE SPECIFICITY</scope>
    <source>
        <tissue>Ureter</tissue>
    </source>
</reference>
<reference key="4">
    <citation type="journal article" date="1998" name="Am. J. Pathol.">
        <title>Uroplakin gene expression by normal and neoplastic human urothelium.</title>
        <authorList>
            <person name="Lobban E.D."/>
            <person name="Smith B.A."/>
            <person name="Hall G.D."/>
            <person name="Harnden P."/>
            <person name="Roberts P."/>
            <person name="Selby P.J."/>
            <person name="Trejdosiewicz L.K."/>
            <person name="Southgate J."/>
        </authorList>
    </citation>
    <scope>TISSUE SPECIFICITY</scope>
</reference>
<name>UPK1A_HUMAN</name>
<accession>O00322</accession>
<accession>Q3KNU5</accession>
<accession>Q3KNU6</accession>
<feature type="chain" id="PRO_0000219286" description="Uroplakin-1a">
    <location>
        <begin position="1"/>
        <end position="258"/>
    </location>
</feature>
<feature type="topological domain" description="Cytoplasmic" evidence="2">
    <location>
        <begin position="1"/>
        <end position="14"/>
    </location>
</feature>
<feature type="transmembrane region" description="Helical" evidence="2">
    <location>
        <begin position="15"/>
        <end position="35"/>
    </location>
</feature>
<feature type="topological domain" description="Extracellular" evidence="2">
    <location>
        <begin position="36"/>
        <end position="59"/>
    </location>
</feature>
<feature type="transmembrane region" description="Helical" evidence="2">
    <location>
        <begin position="60"/>
        <end position="86"/>
    </location>
</feature>
<feature type="topological domain" description="Cytoplasmic" evidence="2">
    <location>
        <begin position="87"/>
        <end position="91"/>
    </location>
</feature>
<feature type="transmembrane region" description="Helical" evidence="2">
    <location>
        <begin position="92"/>
        <end position="112"/>
    </location>
</feature>
<feature type="topological domain" description="Extracellular" evidence="2">
    <location>
        <begin position="113"/>
        <end position="230"/>
    </location>
</feature>
<feature type="transmembrane region" description="Helical" evidence="2">
    <location>
        <begin position="231"/>
        <end position="252"/>
    </location>
</feature>
<feature type="topological domain" description="Cytoplasmic" evidence="2">
    <location>
        <begin position="253"/>
        <end position="258"/>
    </location>
</feature>
<feature type="glycosylation site" description="N-linked (GlcNAc...) asparagine" evidence="2">
    <location>
        <position position="170"/>
    </location>
</feature>
<feature type="splice variant" id="VSP_030005" description="In isoform 2." evidence="6">
    <original>GCFEHIGHAIDSYTWGISWFGFAILMWTLPVMLIAMYFYTML</original>
    <variation>AGVQWHNLSSLQRLPPGFKGFSHLSFQSSWDYRAASNTSATPSTATRGVSRGLGLPS</variation>
    <location>
        <begin position="217"/>
        <end position="258"/>
    </location>
</feature>
<feature type="sequence variant" id="VAR_052332" description="In dbSNP:rs2267586.">
    <original>S</original>
    <variation>A</variation>
    <location>
        <position position="33"/>
    </location>
</feature>
<feature type="sequence variant" id="VAR_020094" description="In dbSNP:rs2285421." evidence="3">
    <original>M</original>
    <variation>T</variation>
    <location>
        <position position="257"/>
    </location>
</feature>
<gene>
    <name type="primary">UPK1A</name>
    <name type="synonym">TSPAN21</name>
</gene>
<comment type="function">
    <text evidence="1">Component of the asymmetric unit membrane (AUM); a highly specialized biomembrane elaborated by terminally differentiated urothelial cells. May play an important role in normal bladder epithelial physiology, possibly in regulating membrane permeability of superficial umbrella cells or in stabilizing the apical membrane through AUM/cytoskeletal interactions (By similarity).</text>
</comment>
<comment type="subunit">
    <text evidence="1">Homodimer; disulfide-linked. Interacts with uroplakin-2 (UPK2) (By similarity).</text>
</comment>
<comment type="interaction">
    <interactant intactId="EBI-14031976">
        <id>O00322</id>
    </interactant>
    <interactant intactId="EBI-11316157">
        <id>P35247</id>
        <label>SFTPD</label>
    </interactant>
    <organismsDiffer>false</organismsDiffer>
    <experiments>3</experiments>
</comment>
<comment type="interaction">
    <interactant intactId="EBI-14031976">
        <id>O00322</id>
    </interactant>
    <interactant intactId="EBI-1028015">
        <id>P08191</id>
        <label>fimH</label>
    </interactant>
    <organismsDiffer>true</organismsDiffer>
    <experiments>2</experiments>
</comment>
<comment type="subcellular location">
    <subcellularLocation>
        <location>Membrane</location>
        <topology>Multi-pass membrane protein</topology>
    </subcellularLocation>
</comment>
<comment type="alternative products">
    <event type="alternative splicing"/>
    <isoform>
        <id>O00322-1</id>
        <name>1</name>
        <sequence type="displayed"/>
    </isoform>
    <isoform>
        <id>O00322-2</id>
        <name>2</name>
        <sequence type="described" ref="VSP_030005"/>
    </isoform>
</comment>
<comment type="tissue specificity">
    <text evidence="4 5">High expression restricted to ureteric urothelium (most superficial cells); low expression in prostate. Expression in normal urothelial cells is lost in culture. Some expression in tumor cell lines derived from urothelial malignancies.</text>
</comment>
<comment type="similarity">
    <text evidence="7">Belongs to the tetraspanin (TM4SF) family.</text>
</comment>